<sequence>MSAVALEKEPLRIPSSQDFAAFVTRSEVEDLLYHEAELLDTWHLHDWLALFTEDCSYFVPSTDLPRTASADDSLFYIADDAVRLRERVIRLMKKTAHAEYPRSRTRHLVSNIRILAANAEEIQVASAFVTYRMKLGNSDAYVGSTHYRLRRIDGQLRIVEKRCFLDLEALRPHGRVSIIL</sequence>
<feature type="chain" id="PRO_0000442283" description="p-cumate 2,3-dioxygenase system, small oxygenase component">
    <location>
        <begin position="1"/>
        <end position="180"/>
    </location>
</feature>
<name>CMTAC_PSEPU</name>
<protein>
    <recommendedName>
        <fullName evidence="4">p-cumate 2,3-dioxygenase system, small oxygenase component</fullName>
    </recommendedName>
    <alternativeName>
        <fullName evidence="4">Small terminal subunit of p-cumate dioxygenase</fullName>
    </alternativeName>
    <alternativeName>
        <fullName evidence="4">p-cumate 2,3-dioxygenase small subunit</fullName>
    </alternativeName>
    <alternativeName>
        <fullName evidence="4">p-cumate 2,3-dioxygenase subunit beta</fullName>
    </alternativeName>
</protein>
<gene>
    <name evidence="4" type="primary">cmtAc</name>
    <name evidence="10" type="ORF">CBP06_10600</name>
</gene>
<organism>
    <name type="scientific">Pseudomonas putida</name>
    <name type="common">Arthrobacter siderocapsulatus</name>
    <dbReference type="NCBI Taxonomy" id="303"/>
    <lineage>
        <taxon>Bacteria</taxon>
        <taxon>Pseudomonadati</taxon>
        <taxon>Pseudomonadota</taxon>
        <taxon>Gammaproteobacteria</taxon>
        <taxon>Pseudomonadales</taxon>
        <taxon>Pseudomonadaceae</taxon>
        <taxon>Pseudomonas</taxon>
    </lineage>
</organism>
<proteinExistence type="evidence at protein level"/>
<keyword id="KW-0058">Aromatic hydrocarbons catabolism</keyword>
<keyword id="KW-0223">Dioxygenase</keyword>
<keyword id="KW-0560">Oxidoreductase</keyword>
<dbReference type="EMBL" id="U24215">
    <property type="protein sequence ID" value="AAB62286.1"/>
    <property type="molecule type" value="Genomic_DNA"/>
</dbReference>
<dbReference type="EMBL" id="GQ884177">
    <property type="protein sequence ID" value="ADI95384.1"/>
    <property type="molecule type" value="Genomic_DNA"/>
</dbReference>
<dbReference type="EMBL" id="DQ157469">
    <property type="protein sequence ID" value="ABA10795.1"/>
    <property type="molecule type" value="Genomic_DNA"/>
</dbReference>
<dbReference type="EMBL" id="AB042508">
    <property type="protein sequence ID" value="BAB17772.1"/>
    <property type="molecule type" value="Genomic_DNA"/>
</dbReference>
<dbReference type="EMBL" id="NHBC01000013">
    <property type="protein sequence ID" value="OUS88311.1"/>
    <property type="molecule type" value="Genomic_DNA"/>
</dbReference>
<dbReference type="SMR" id="Q51975"/>
<dbReference type="BioCyc" id="MetaCyc:MONOMER-346"/>
<dbReference type="BRENDA" id="1.14.12.25">
    <property type="organism ID" value="5092"/>
</dbReference>
<dbReference type="GO" id="GO:0051213">
    <property type="term" value="F:dioxygenase activity"/>
    <property type="evidence" value="ECO:0007669"/>
    <property type="project" value="UniProtKB-KW"/>
</dbReference>
<dbReference type="GO" id="GO:0019380">
    <property type="term" value="P:3-phenylpropionate catabolic process"/>
    <property type="evidence" value="ECO:0007669"/>
    <property type="project" value="TreeGrafter"/>
</dbReference>
<dbReference type="CDD" id="cd00667">
    <property type="entry name" value="ring_hydroxylating_dioxygenases_beta"/>
    <property type="match status" value="1"/>
</dbReference>
<dbReference type="Gene3D" id="3.10.450.50">
    <property type="match status" value="1"/>
</dbReference>
<dbReference type="InterPro" id="IPR032710">
    <property type="entry name" value="NTF2-like_dom_sf"/>
</dbReference>
<dbReference type="InterPro" id="IPR000391">
    <property type="entry name" value="Rng_hydr_dOase-bsu"/>
</dbReference>
<dbReference type="PANTHER" id="PTHR41534:SF2">
    <property type="entry name" value="3-PHENYLPROPIONATE_CINNAMIC ACID DIOXYGENASE SUBUNIT BETA"/>
    <property type="match status" value="1"/>
</dbReference>
<dbReference type="PANTHER" id="PTHR41534">
    <property type="entry name" value="BLR3401 PROTEIN"/>
    <property type="match status" value="1"/>
</dbReference>
<dbReference type="Pfam" id="PF00866">
    <property type="entry name" value="Ring_hydroxyl_B"/>
    <property type="match status" value="1"/>
</dbReference>
<dbReference type="SUPFAM" id="SSF54427">
    <property type="entry name" value="NTF2-like"/>
    <property type="match status" value="1"/>
</dbReference>
<evidence type="ECO:0000269" key="1">
    <source>
    </source>
</evidence>
<evidence type="ECO:0000269" key="2">
    <source>
    </source>
</evidence>
<evidence type="ECO:0000269" key="3">
    <source>
    </source>
</evidence>
<evidence type="ECO:0000303" key="4">
    <source>
    </source>
</evidence>
<evidence type="ECO:0000305" key="5"/>
<evidence type="ECO:0000305" key="6">
    <source>
    </source>
</evidence>
<evidence type="ECO:0000312" key="7">
    <source>
        <dbReference type="EMBL" id="AAB62286.1"/>
    </source>
</evidence>
<evidence type="ECO:0000312" key="8">
    <source>
        <dbReference type="EMBL" id="ABA10795.1"/>
    </source>
</evidence>
<evidence type="ECO:0000312" key="9">
    <source>
        <dbReference type="EMBL" id="ADI95384.1"/>
    </source>
</evidence>
<evidence type="ECO:0000312" key="10">
    <source>
        <dbReference type="EMBL" id="OUS88311.1"/>
    </source>
</evidence>
<comment type="function">
    <text evidence="1 2 6">Component of the p-cumate 2,3-dioxygenase multicomponent enzyme system which catalyzes the incorporation of both atoms of molecular oxygen into p-cumate to form cis-2,3-dihydroxy-2,3-dihydro-p-cumate. The beta subunit seems to have a structural role in the holoenzyme. Also able to catalyze the cis-dihydroxylation of indole-2-carboxylate and indole-3-carboxylate (PubMed:7592495).</text>
</comment>
<comment type="pathway">
    <text evidence="6">Aromatic compound metabolism; p-cumate degradation; acetaldehyde and pyruvate from p-cumate.</text>
</comment>
<comment type="subunit">
    <text evidence="6">The p-cumate 2,3-dioxygenase multicomponent enzyme system is composed of an electron transfer component and a dioxygenase component (iron sulfur protein (ISP)). The electron transfer component is composed of a ferredoxin reductase (CmtAa) and a ferredoxin (CmtAd), and the dioxygenase component is formed of a large alpha subunit (CmtAb) and a small beta subunit (CmtAc).</text>
</comment>
<comment type="induction">
    <text evidence="3">Induced by p-cumate and repressed by CymR.</text>
</comment>
<comment type="similarity">
    <text evidence="5">Belongs to the bacterial ring-hydroxylating dioxygenase beta subunit family.</text>
</comment>
<reference key="1">
    <citation type="journal article" date="1996" name="J. Bacteriol.">
        <title>p-cumate catabolic pathway in Pseudomonas putida F1: cloning and characterization of DNA carrying the cmt operon.</title>
        <authorList>
            <person name="Eaton R.W."/>
        </authorList>
    </citation>
    <scope>NUCLEOTIDE SEQUENCE [GENOMIC DNA]</scope>
    <scope>FUNCTION</scope>
    <scope>PATHWAY</scope>
    <scope>SUBUNIT</scope>
    <source>
        <strain evidence="7">F1</strain>
    </source>
</reference>
<reference key="2">
    <citation type="journal article" date="1997" name="J. Bacteriol.">
        <title>p-Cymene catabolic pathway in Pseudomonas putida F1: cloning and characterization of DNA encoding conversion of p-cymene to p-cumate.</title>
        <authorList>
            <person name="Eaton R.W."/>
        </authorList>
    </citation>
    <scope>NUCLEOTIDE SEQUENCE [GENOMIC DNA]</scope>
    <scope>INDUCTION</scope>
    <source>
        <strain evidence="7">F1</strain>
    </source>
</reference>
<reference key="3">
    <citation type="journal article" date="1999" name="Gene">
        <title>Toluene metabolism by the solvent-tolerant Pseudomonas putida DOT-T1 strain, and its role in solvent impermeabilization.</title>
        <authorList>
            <person name="Mosqueda G."/>
            <person name="Ramos-Gonzalez M.I."/>
            <person name="Ramos J.L."/>
        </authorList>
    </citation>
    <scope>NUCLEOTIDE SEQUENCE [GENOMIC DNA]</scope>
    <source>
        <strain evidence="9">DOT-T1E</strain>
    </source>
</reference>
<reference key="4">
    <citation type="journal article" date="2000" name="J. Bacteriol.">
        <title>A set of genes encoding a second toluene efflux system in Pseudomonas putida DOT-T1 is linked to the tod genes for toluene metabolism.</title>
        <authorList>
            <person name="Mosqueda G."/>
            <person name="Ramos J.L."/>
        </authorList>
    </citation>
    <scope>NUCLEOTIDE SEQUENCE [GENOMIC DNA]</scope>
    <source>
        <strain evidence="9">DOT-T1E</strain>
    </source>
</reference>
<reference key="5">
    <citation type="journal article" date="2001" name="Microbiology">
        <title>Pseudomonas putida CE2010 can degrade biphenyl by a mosaic pathway encoded by the tod operon and cmtE, which are identical to those of P. putida F1 except for a single base difference in the operator-promoter region of the cmt operon.</title>
        <authorList>
            <person name="Ohta Y."/>
            <person name="Maeda M."/>
            <person name="Kudo T."/>
        </authorList>
    </citation>
    <scope>NUCLEOTIDE SEQUENCE [GENOMIC DNA]</scope>
</reference>
<reference key="6">
    <citation type="journal article" date="2001" name="Mol. Microbiol.">
        <title>Global and cognate regulators control the expression of the organic solvent efflux pumps TtgABC and TtgDEF of Pseudomonas putida.</title>
        <authorList>
            <person name="Duque E."/>
            <person name="Segura A."/>
            <person name="Mosqueda G."/>
            <person name="Ramos J.L."/>
        </authorList>
    </citation>
    <scope>NUCLEOTIDE SEQUENCE [GENOMIC DNA]</scope>
    <source>
        <strain evidence="9">DOT-T1E</strain>
    </source>
</reference>
<reference key="7">
    <citation type="journal article" date="2006" name="J. Microbiol.">
        <title>Identification and expression of the cym, cmt, and tod catabolic genes from Pseudomonas putida KL47: expression of the regulatory todST genes as a factor for catabolic adaptation.</title>
        <authorList>
            <person name="Lee K."/>
            <person name="Ryu E.K."/>
            <person name="Choi K.S."/>
            <person name="Cho M.C."/>
            <person name="Jeong J.J."/>
            <person name="Choi E.N."/>
            <person name="Lee S.O."/>
            <person name="Yoon D.Y."/>
            <person name="Hwang I."/>
            <person name="Kim C.K."/>
        </authorList>
    </citation>
    <scope>NUCLEOTIDE SEQUENCE [GENOMIC DNA]</scope>
    <source>
        <strain evidence="8">KL47</strain>
    </source>
</reference>
<reference key="8">
    <citation type="submission" date="2009-08" db="EMBL/GenBank/DDBJ databases">
        <title>Global regulation of food supply by Pseudomonas putida DOT-T1E.</title>
        <authorList>
            <person name="Daniels C."/>
            <person name="Godoy P."/>
            <person name="Duque E."/>
            <person name="Molina-Henares M.A."/>
            <person name="de la Torre J."/>
            <person name="Del Arco J.M."/>
            <person name="Herrera C."/>
            <person name="Segura A."/>
            <person name="Guazzaroni M.E."/>
            <person name="Ferrer M."/>
            <person name="Ramos J.L."/>
        </authorList>
    </citation>
    <scope>NUCLEOTIDE SEQUENCE [GENOMIC DNA]</scope>
    <source>
        <strain evidence="9">DOT-T1E</strain>
    </source>
</reference>
<reference key="9">
    <citation type="submission" date="2017-05" db="EMBL/GenBank/DDBJ databases">
        <title>Pseudomonas putida UV495 draft genome.</title>
        <authorList>
            <person name="Skvortsov T."/>
            <person name="Hoering P."/>
            <person name="Allen C.C.R."/>
        </authorList>
    </citation>
    <scope>NUCLEOTIDE SEQUENCE [LARGE SCALE GENOMIC DNA]</scope>
    <source>
        <strain evidence="10">UV4/95</strain>
    </source>
</reference>
<reference key="10">
    <citation type="journal article" date="1977" name="J. Bacteriol.">
        <title>p-cymene pathway in Pseudomonas putida: initial reactions.</title>
        <authorList>
            <person name="DeFrank J.J."/>
            <person name="Ribbons D.W."/>
        </authorList>
    </citation>
    <scope>FUNCTION</scope>
    <source>
        <strain>PL</strain>
    </source>
</reference>
<reference key="11">
    <citation type="journal article" date="1995" name="J. Bacteriol.">
        <title>Formation of indigo and related compounds from indolecarboxylic acids by aromatic acid-degrading bacteria: chromogenic reactions for cloning genes encoding dioxygenases that act on aromatic acids.</title>
        <authorList>
            <person name="Eaton R.W."/>
            <person name="Chapman P.J."/>
        </authorList>
    </citation>
    <scope>FUNCTION</scope>
    <scope>SUBSTRATE SPECIFICITY</scope>
</reference>
<accession>Q51975</accession>